<accession>Q9RTT6</accession>
<gene>
    <name type="primary">cysS</name>
    <name type="ordered locus">DR_1670</name>
</gene>
<reference key="1">
    <citation type="journal article" date="1999" name="Science">
        <title>Genome sequence of the radioresistant bacterium Deinococcus radiodurans R1.</title>
        <authorList>
            <person name="White O."/>
            <person name="Eisen J.A."/>
            <person name="Heidelberg J.F."/>
            <person name="Hickey E.K."/>
            <person name="Peterson J.D."/>
            <person name="Dodson R.J."/>
            <person name="Haft D.H."/>
            <person name="Gwinn M.L."/>
            <person name="Nelson W.C."/>
            <person name="Richardson D.L."/>
            <person name="Moffat K.S."/>
            <person name="Qin H."/>
            <person name="Jiang L."/>
            <person name="Pamphile W."/>
            <person name="Crosby M."/>
            <person name="Shen M."/>
            <person name="Vamathevan J.J."/>
            <person name="Lam P."/>
            <person name="McDonald L.A."/>
            <person name="Utterback T.R."/>
            <person name="Zalewski C."/>
            <person name="Makarova K.S."/>
            <person name="Aravind L."/>
            <person name="Daly M.J."/>
            <person name="Minton K.W."/>
            <person name="Fleischmann R.D."/>
            <person name="Ketchum K.A."/>
            <person name="Nelson K.E."/>
            <person name="Salzberg S.L."/>
            <person name="Smith H.O."/>
            <person name="Venter J.C."/>
            <person name="Fraser C.M."/>
        </authorList>
    </citation>
    <scope>NUCLEOTIDE SEQUENCE [LARGE SCALE GENOMIC DNA]</scope>
    <source>
        <strain>ATCC 13939 / DSM 20539 / JCM 16871 / CCUG 27074 / LMG 4051 / NBRC 15346 / NCIMB 9279 / VKM B-1422 / R1</strain>
    </source>
</reference>
<name>SYC_DEIRA</name>
<keyword id="KW-0030">Aminoacyl-tRNA synthetase</keyword>
<keyword id="KW-0067">ATP-binding</keyword>
<keyword id="KW-0963">Cytoplasm</keyword>
<keyword id="KW-0436">Ligase</keyword>
<keyword id="KW-0479">Metal-binding</keyword>
<keyword id="KW-0547">Nucleotide-binding</keyword>
<keyword id="KW-0648">Protein biosynthesis</keyword>
<keyword id="KW-1185">Reference proteome</keyword>
<keyword id="KW-0862">Zinc</keyword>
<organism>
    <name type="scientific">Deinococcus radiodurans (strain ATCC 13939 / DSM 20539 / JCM 16871 / CCUG 27074 / LMG 4051 / NBRC 15346 / NCIMB 9279 / VKM B-1422 / R1)</name>
    <dbReference type="NCBI Taxonomy" id="243230"/>
    <lineage>
        <taxon>Bacteria</taxon>
        <taxon>Thermotogati</taxon>
        <taxon>Deinococcota</taxon>
        <taxon>Deinococci</taxon>
        <taxon>Deinococcales</taxon>
        <taxon>Deinococcaceae</taxon>
        <taxon>Deinococcus</taxon>
    </lineage>
</organism>
<feature type="chain" id="PRO_0000159391" description="Cysteine--tRNA ligase">
    <location>
        <begin position="1"/>
        <end position="498"/>
    </location>
</feature>
<feature type="short sequence motif" description="'HIGH' region">
    <location>
        <begin position="46"/>
        <end position="56"/>
    </location>
</feature>
<feature type="short sequence motif" description="'KMSKS' region">
    <location>
        <begin position="291"/>
        <end position="295"/>
    </location>
</feature>
<feature type="binding site" evidence="1">
    <location>
        <position position="44"/>
    </location>
    <ligand>
        <name>Zn(2+)</name>
        <dbReference type="ChEBI" id="CHEBI:29105"/>
    </ligand>
</feature>
<feature type="binding site" evidence="1">
    <location>
        <position position="235"/>
    </location>
    <ligand>
        <name>Zn(2+)</name>
        <dbReference type="ChEBI" id="CHEBI:29105"/>
    </ligand>
</feature>
<feature type="binding site" evidence="1">
    <location>
        <position position="260"/>
    </location>
    <ligand>
        <name>Zn(2+)</name>
        <dbReference type="ChEBI" id="CHEBI:29105"/>
    </ligand>
</feature>
<feature type="binding site" evidence="1">
    <location>
        <position position="264"/>
    </location>
    <ligand>
        <name>Zn(2+)</name>
        <dbReference type="ChEBI" id="CHEBI:29105"/>
    </ligand>
</feature>
<feature type="binding site" evidence="1">
    <location>
        <position position="294"/>
    </location>
    <ligand>
        <name>ATP</name>
        <dbReference type="ChEBI" id="CHEBI:30616"/>
    </ligand>
</feature>
<comment type="catalytic activity">
    <reaction>
        <text>tRNA(Cys) + L-cysteine + ATP = L-cysteinyl-tRNA(Cys) + AMP + diphosphate</text>
        <dbReference type="Rhea" id="RHEA:17773"/>
        <dbReference type="Rhea" id="RHEA-COMP:9661"/>
        <dbReference type="Rhea" id="RHEA-COMP:9679"/>
        <dbReference type="ChEBI" id="CHEBI:30616"/>
        <dbReference type="ChEBI" id="CHEBI:33019"/>
        <dbReference type="ChEBI" id="CHEBI:35235"/>
        <dbReference type="ChEBI" id="CHEBI:78442"/>
        <dbReference type="ChEBI" id="CHEBI:78517"/>
        <dbReference type="ChEBI" id="CHEBI:456215"/>
        <dbReference type="EC" id="6.1.1.16"/>
    </reaction>
</comment>
<comment type="cofactor">
    <cofactor evidence="1">
        <name>Zn(2+)</name>
        <dbReference type="ChEBI" id="CHEBI:29105"/>
    </cofactor>
    <text evidence="1">Binds 1 zinc ion per subunit.</text>
</comment>
<comment type="subunit">
    <text evidence="1">Monomer.</text>
</comment>
<comment type="subcellular location">
    <subcellularLocation>
        <location evidence="1">Cytoplasm</location>
    </subcellularLocation>
</comment>
<comment type="similarity">
    <text evidence="2">Belongs to the class-I aminoacyl-tRNA synthetase family.</text>
</comment>
<comment type="sequence caution" evidence="2">
    <conflict type="erroneous initiation">
        <sequence resource="EMBL-CDS" id="AAF11225"/>
    </conflict>
</comment>
<evidence type="ECO:0000250" key="1"/>
<evidence type="ECO:0000305" key="2"/>
<proteinExistence type="inferred from homology"/>
<protein>
    <recommendedName>
        <fullName>Cysteine--tRNA ligase</fullName>
        <ecNumber>6.1.1.16</ecNumber>
    </recommendedName>
    <alternativeName>
        <fullName>Cysteinyl-tRNA synthetase</fullName>
        <shortName>CysRS</shortName>
    </alternativeName>
</protein>
<dbReference type="EC" id="6.1.1.16"/>
<dbReference type="EMBL" id="AE000513">
    <property type="protein sequence ID" value="AAF11225.1"/>
    <property type="status" value="ALT_INIT"/>
    <property type="molecule type" value="Genomic_DNA"/>
</dbReference>
<dbReference type="PIR" id="A75368">
    <property type="entry name" value="A75368"/>
</dbReference>
<dbReference type="RefSeq" id="NP_295393.1">
    <property type="nucleotide sequence ID" value="NC_001263.1"/>
</dbReference>
<dbReference type="RefSeq" id="WP_027479901.1">
    <property type="nucleotide sequence ID" value="NC_001263.1"/>
</dbReference>
<dbReference type="SMR" id="Q9RTT6"/>
<dbReference type="FunCoup" id="Q9RTT6">
    <property type="interactions" value="393"/>
</dbReference>
<dbReference type="STRING" id="243230.DR_1670"/>
<dbReference type="PaxDb" id="243230-DR_1670"/>
<dbReference type="EnsemblBacteria" id="AAF11225">
    <property type="protein sequence ID" value="AAF11225"/>
    <property type="gene ID" value="DR_1670"/>
</dbReference>
<dbReference type="GeneID" id="69517906"/>
<dbReference type="KEGG" id="dra:DR_1670"/>
<dbReference type="PATRIC" id="fig|243230.17.peg.1879"/>
<dbReference type="eggNOG" id="COG0215">
    <property type="taxonomic scope" value="Bacteria"/>
</dbReference>
<dbReference type="HOGENOM" id="CLU_013528_0_1_0"/>
<dbReference type="InParanoid" id="Q9RTT6"/>
<dbReference type="OrthoDB" id="9815130at2"/>
<dbReference type="Proteomes" id="UP000002524">
    <property type="component" value="Chromosome 1"/>
</dbReference>
<dbReference type="GO" id="GO:0005737">
    <property type="term" value="C:cytoplasm"/>
    <property type="evidence" value="ECO:0000318"/>
    <property type="project" value="GO_Central"/>
</dbReference>
<dbReference type="GO" id="GO:0005829">
    <property type="term" value="C:cytosol"/>
    <property type="evidence" value="ECO:0000318"/>
    <property type="project" value="GO_Central"/>
</dbReference>
<dbReference type="GO" id="GO:0005524">
    <property type="term" value="F:ATP binding"/>
    <property type="evidence" value="ECO:0000318"/>
    <property type="project" value="GO_Central"/>
</dbReference>
<dbReference type="GO" id="GO:0004817">
    <property type="term" value="F:cysteine-tRNA ligase activity"/>
    <property type="evidence" value="ECO:0000318"/>
    <property type="project" value="GO_Central"/>
</dbReference>
<dbReference type="GO" id="GO:0008270">
    <property type="term" value="F:zinc ion binding"/>
    <property type="evidence" value="ECO:0007669"/>
    <property type="project" value="UniProtKB-UniRule"/>
</dbReference>
<dbReference type="GO" id="GO:0006423">
    <property type="term" value="P:cysteinyl-tRNA aminoacylation"/>
    <property type="evidence" value="ECO:0000318"/>
    <property type="project" value="GO_Central"/>
</dbReference>
<dbReference type="CDD" id="cd00672">
    <property type="entry name" value="CysRS_core"/>
    <property type="match status" value="1"/>
</dbReference>
<dbReference type="FunFam" id="1.20.120.1910:FF:000022">
    <property type="entry name" value="Cysteine--tRNA ligase"/>
    <property type="match status" value="1"/>
</dbReference>
<dbReference type="FunFam" id="3.40.50.620:FF:000130">
    <property type="entry name" value="Cysteine--tRNA ligase"/>
    <property type="match status" value="1"/>
</dbReference>
<dbReference type="Gene3D" id="1.20.120.1910">
    <property type="entry name" value="Cysteine-tRNA ligase, C-terminal anti-codon recognition domain"/>
    <property type="match status" value="1"/>
</dbReference>
<dbReference type="Gene3D" id="3.40.50.620">
    <property type="entry name" value="HUPs"/>
    <property type="match status" value="1"/>
</dbReference>
<dbReference type="HAMAP" id="MF_00041">
    <property type="entry name" value="Cys_tRNA_synth"/>
    <property type="match status" value="1"/>
</dbReference>
<dbReference type="InterPro" id="IPR015803">
    <property type="entry name" value="Cys-tRNA-ligase"/>
</dbReference>
<dbReference type="InterPro" id="IPR015273">
    <property type="entry name" value="Cys-tRNA-synt_Ia_DALR"/>
</dbReference>
<dbReference type="InterPro" id="IPR024909">
    <property type="entry name" value="Cys-tRNA/MSH_ligase"/>
</dbReference>
<dbReference type="InterPro" id="IPR056411">
    <property type="entry name" value="CysS_C"/>
</dbReference>
<dbReference type="InterPro" id="IPR014729">
    <property type="entry name" value="Rossmann-like_a/b/a_fold"/>
</dbReference>
<dbReference type="InterPro" id="IPR032678">
    <property type="entry name" value="tRNA-synt_1_cat_dom"/>
</dbReference>
<dbReference type="InterPro" id="IPR009080">
    <property type="entry name" value="tRNAsynth_Ia_anticodon-bd"/>
</dbReference>
<dbReference type="NCBIfam" id="TIGR00435">
    <property type="entry name" value="cysS"/>
    <property type="match status" value="1"/>
</dbReference>
<dbReference type="PANTHER" id="PTHR10890:SF3">
    <property type="entry name" value="CYSTEINE--TRNA LIGASE, CYTOPLASMIC"/>
    <property type="match status" value="1"/>
</dbReference>
<dbReference type="PANTHER" id="PTHR10890">
    <property type="entry name" value="CYSTEINYL-TRNA SYNTHETASE"/>
    <property type="match status" value="1"/>
</dbReference>
<dbReference type="Pfam" id="PF23493">
    <property type="entry name" value="CysS_C"/>
    <property type="match status" value="1"/>
</dbReference>
<dbReference type="Pfam" id="PF09190">
    <property type="entry name" value="DALR_2"/>
    <property type="match status" value="1"/>
</dbReference>
<dbReference type="Pfam" id="PF01406">
    <property type="entry name" value="tRNA-synt_1e"/>
    <property type="match status" value="1"/>
</dbReference>
<dbReference type="PRINTS" id="PR00983">
    <property type="entry name" value="TRNASYNTHCYS"/>
</dbReference>
<dbReference type="SMART" id="SM00840">
    <property type="entry name" value="DALR_2"/>
    <property type="match status" value="1"/>
</dbReference>
<dbReference type="SUPFAM" id="SSF47323">
    <property type="entry name" value="Anticodon-binding domain of a subclass of class I aminoacyl-tRNA synthetases"/>
    <property type="match status" value="1"/>
</dbReference>
<dbReference type="SUPFAM" id="SSF52374">
    <property type="entry name" value="Nucleotidylyl transferase"/>
    <property type="match status" value="1"/>
</dbReference>
<sequence>MTQPTITQDTARQPNPNITLYDTMQRQKVPFVPGTPGYVGMYLCGPTVYSDAHLGHAKKEVAFDVIRRALTHFGYQVRYVSNITDVGHLLNDADEGEDKLQARARLEQLEPMEVADKYFWSFFRDMDALNVLRPSINPRATGHIQEQIKLIEELIEKGHAYESAGSVYFDVRSWPEYGKLSGRKLDDQEEGTREAVRDEKRDPRDFALWKKAEPEHLMRWDSPWSVGFPGWHIECSAMSLKYLGEGFDIHGGGLDLQFPHHEAEIAQAEAAGHHFARYWMHNNMLTIGGEKMSKSKGNFTTIQDILKKYDPMVVRFLLVSSHYRSVTEMNEEAFASAANGYRRLSETLHEIERRLKDAPAGSDTALDSKIAARVTEFEDAMRDDFNTPKAVASLFGLTGELNTALNAGPVGRDTLERARDAYRSLGGDVLGLFAETGSAASVAQDDASVIDALMDLVLKARQNYRLQKQYAEADELRETLGKAGITVEDTKDGARWKR</sequence>